<evidence type="ECO:0000250" key="1"/>
<evidence type="ECO:0000255" key="2"/>
<evidence type="ECO:0000269" key="3">
    <source>
    </source>
</evidence>
<evidence type="ECO:0000269" key="4">
    <source>
    </source>
</evidence>
<evidence type="ECO:0000305" key="5"/>
<evidence type="ECO:0007744" key="6">
    <source>
    </source>
</evidence>
<feature type="chain" id="PRO_0000212454" description="Medium-chain fatty acid ethyl ester synthase/esterase 2">
    <location>
        <begin position="1"/>
        <end position="451"/>
    </location>
</feature>
<feature type="domain" description="AB hydrolase-1" evidence="2">
    <location>
        <begin position="166"/>
        <end position="430"/>
    </location>
</feature>
<feature type="active site" description="Charge relay system" evidence="1">
    <location>
        <position position="247"/>
    </location>
</feature>
<feature type="active site" description="Charge relay system" evidence="1">
    <location>
        <position position="395"/>
    </location>
</feature>
<feature type="active site" description="Charge relay system" evidence="1">
    <location>
        <position position="423"/>
    </location>
</feature>
<feature type="cross-link" description="Glycyl lysine isopeptide (Lys-Gly) (interchain with G-Cter in ubiquitin)" evidence="6">
    <location>
        <position position="114"/>
    </location>
</feature>
<organism>
    <name type="scientific">Saccharomyces cerevisiae (strain ATCC 204508 / S288c)</name>
    <name type="common">Baker's yeast</name>
    <dbReference type="NCBI Taxonomy" id="559292"/>
    <lineage>
        <taxon>Eukaryota</taxon>
        <taxon>Fungi</taxon>
        <taxon>Dikarya</taxon>
        <taxon>Ascomycota</taxon>
        <taxon>Saccharomycotina</taxon>
        <taxon>Saccharomycetes</taxon>
        <taxon>Saccharomycetales</taxon>
        <taxon>Saccharomycetaceae</taxon>
        <taxon>Saccharomyces</taxon>
    </lineage>
</organism>
<gene>
    <name type="primary">EHT1</name>
    <name type="ordered locus">YBR177C</name>
    <name type="ORF">YBR1239</name>
</gene>
<sequence length="451" mass="51255">MSEVSKWPAINPFHWGYNGTVSHIVGENGSIKLHLKDNKEQVDFDEFANKYVPTLKNGAQFKLSPYLFTGILQTLYLGAADFSKKFPVFYGREIVKFSDGGVCTADWLIDSWKKDYEFDQSTTSFDKKKFDKDEKATHPEGWPRLQPRTRYLKDNELEELREVDLPLVVILHGLAGGSHEPIIRSLAENLSRSGRFQVVVLNTRGCARSKITTRNLFTAYHTMDIREFLQREKQRHPDRKLYAVGCSFGATMLANYLGEEGDKSPLSAAATLCNPWDLLLSAIRMSQDWWSRTLFSKNIAQFLTRTVQVNMGELGVPNGSLPDHPPTVKNPSFYMFTPENLIKAKSFKSTREFDEVYTAPALGFPNAMEYYKAASSINRVDTIRVPTLVINSRDDPVVGPDQPYSIVEKNPRILYCRTDLGGHLAYLDKDNNSWATKAIAEFFTKFDELVV</sequence>
<proteinExistence type="evidence at protein level"/>
<comment type="function">
    <text evidence="4">Displays enzymatic activity both for medium-chain fatty acid (MCFA) ethyl ester synthesis and hydrolysis (esterase activity). MCFA are toxic for yeast and this enzyme could thus be involved in their detoxification by esterification.</text>
</comment>
<comment type="catalytic activity">
    <reaction>
        <text>an aliphatic alcohol + acetyl-CoA = an acetyl ester + CoA</text>
        <dbReference type="Rhea" id="RHEA:17229"/>
        <dbReference type="ChEBI" id="CHEBI:2571"/>
        <dbReference type="ChEBI" id="CHEBI:47622"/>
        <dbReference type="ChEBI" id="CHEBI:57287"/>
        <dbReference type="ChEBI" id="CHEBI:57288"/>
        <dbReference type="EC" id="2.3.1.84"/>
    </reaction>
</comment>
<comment type="miscellaneous">
    <text evidence="3">Present with 2550 molecules/cell in log phase SD medium.</text>
</comment>
<comment type="similarity">
    <text evidence="5">Belongs to the AB hydrolase superfamily. AB hydrolase 4 family.</text>
</comment>
<dbReference type="EC" id="2.3.1.84"/>
<dbReference type="EC" id="3.1.1.-"/>
<dbReference type="EMBL" id="Z36046">
    <property type="protein sequence ID" value="CAA85138.1"/>
    <property type="molecule type" value="Genomic_DNA"/>
</dbReference>
<dbReference type="EMBL" id="BK006936">
    <property type="protein sequence ID" value="DAA07292.1"/>
    <property type="molecule type" value="Genomic_DNA"/>
</dbReference>
<dbReference type="PIR" id="S46048">
    <property type="entry name" value="S46048"/>
</dbReference>
<dbReference type="RefSeq" id="NP_009736.3">
    <property type="nucleotide sequence ID" value="NM_001178525.3"/>
</dbReference>
<dbReference type="BioGRID" id="32876">
    <property type="interactions" value="155"/>
</dbReference>
<dbReference type="FunCoup" id="P38295">
    <property type="interactions" value="435"/>
</dbReference>
<dbReference type="IntAct" id="P38295">
    <property type="interactions" value="24"/>
</dbReference>
<dbReference type="MINT" id="P38295"/>
<dbReference type="STRING" id="4932.YBR177C"/>
<dbReference type="ESTHER" id="yeast-MCFS2">
    <property type="family name" value="abh_upf0017"/>
</dbReference>
<dbReference type="iPTMnet" id="P38295"/>
<dbReference type="PaxDb" id="4932-YBR177C"/>
<dbReference type="PeptideAtlas" id="P38295"/>
<dbReference type="EnsemblFungi" id="YBR177C_mRNA">
    <property type="protein sequence ID" value="YBR177C"/>
    <property type="gene ID" value="YBR177C"/>
</dbReference>
<dbReference type="GeneID" id="852476"/>
<dbReference type="KEGG" id="sce:YBR177C"/>
<dbReference type="AGR" id="SGD:S000000381"/>
<dbReference type="SGD" id="S000000381">
    <property type="gene designation" value="EHT1"/>
</dbReference>
<dbReference type="VEuPathDB" id="FungiDB:YBR177C"/>
<dbReference type="eggNOG" id="KOG1838">
    <property type="taxonomic scope" value="Eukaryota"/>
</dbReference>
<dbReference type="GeneTree" id="ENSGT00950000182902"/>
<dbReference type="HOGENOM" id="CLU_032487_1_0_1"/>
<dbReference type="InParanoid" id="P38295"/>
<dbReference type="OMA" id="HTMDIRE"/>
<dbReference type="OrthoDB" id="5954035at2759"/>
<dbReference type="BioCyc" id="MetaCyc:YBR177C-MONOMER"/>
<dbReference type="BioCyc" id="YEAST:YBR177C-MONOMER"/>
<dbReference type="Reactome" id="R-SCE-1483191">
    <property type="pathway name" value="Synthesis of PC"/>
</dbReference>
<dbReference type="BioGRID-ORCS" id="852476">
    <property type="hits" value="0 hits in 10 CRISPR screens"/>
</dbReference>
<dbReference type="PRO" id="PR:P38295"/>
<dbReference type="Proteomes" id="UP000002311">
    <property type="component" value="Chromosome II"/>
</dbReference>
<dbReference type="RNAct" id="P38295">
    <property type="molecule type" value="protein"/>
</dbReference>
<dbReference type="GO" id="GO:0005811">
    <property type="term" value="C:lipid droplet"/>
    <property type="evidence" value="ECO:0000314"/>
    <property type="project" value="SGD"/>
</dbReference>
<dbReference type="GO" id="GO:0005741">
    <property type="term" value="C:mitochondrial outer membrane"/>
    <property type="evidence" value="ECO:0007005"/>
    <property type="project" value="SGD"/>
</dbReference>
<dbReference type="GO" id="GO:0005739">
    <property type="term" value="C:mitochondrion"/>
    <property type="evidence" value="ECO:0007005"/>
    <property type="project" value="SGD"/>
</dbReference>
<dbReference type="GO" id="GO:0008126">
    <property type="term" value="F:acetylesterase activity"/>
    <property type="evidence" value="ECO:0000318"/>
    <property type="project" value="GO_Central"/>
</dbReference>
<dbReference type="GO" id="GO:0004026">
    <property type="term" value="F:alcohol O-acetyltransferase activity"/>
    <property type="evidence" value="ECO:0000314"/>
    <property type="project" value="SGD"/>
</dbReference>
<dbReference type="GO" id="GO:0047372">
    <property type="term" value="F:monoacylglycerol lipase activity"/>
    <property type="evidence" value="ECO:0000318"/>
    <property type="project" value="GO_Central"/>
</dbReference>
<dbReference type="GO" id="GO:0017171">
    <property type="term" value="F:serine hydrolase activity"/>
    <property type="evidence" value="ECO:0007005"/>
    <property type="project" value="SGD"/>
</dbReference>
<dbReference type="GO" id="GO:0034338">
    <property type="term" value="F:short-chain carboxylesterase activity"/>
    <property type="evidence" value="ECO:0000314"/>
    <property type="project" value="SGD"/>
</dbReference>
<dbReference type="GO" id="GO:0006629">
    <property type="term" value="P:lipid metabolic process"/>
    <property type="evidence" value="ECO:0000315"/>
    <property type="project" value="SGD"/>
</dbReference>
<dbReference type="GO" id="GO:0051792">
    <property type="term" value="P:medium-chain fatty acid biosynthetic process"/>
    <property type="evidence" value="ECO:0000314"/>
    <property type="project" value="SGD"/>
</dbReference>
<dbReference type="GO" id="GO:0051793">
    <property type="term" value="P:medium-chain fatty acid catabolic process"/>
    <property type="evidence" value="ECO:0000315"/>
    <property type="project" value="SGD"/>
</dbReference>
<dbReference type="FunFam" id="3.40.50.1820:FF:000137">
    <property type="entry name" value="EEB1p Acyl-coenzymeA:ethanol O-acyltransferase"/>
    <property type="match status" value="1"/>
</dbReference>
<dbReference type="Gene3D" id="3.40.50.1820">
    <property type="entry name" value="alpha/beta hydrolase"/>
    <property type="match status" value="1"/>
</dbReference>
<dbReference type="InterPro" id="IPR000073">
    <property type="entry name" value="AB_hydrolase_1"/>
</dbReference>
<dbReference type="InterPro" id="IPR000952">
    <property type="entry name" value="AB_hydrolase_4_CS"/>
</dbReference>
<dbReference type="InterPro" id="IPR050960">
    <property type="entry name" value="AB_hydrolase_4_sf"/>
</dbReference>
<dbReference type="InterPro" id="IPR029058">
    <property type="entry name" value="AB_hydrolase_fold"/>
</dbReference>
<dbReference type="InterPro" id="IPR012020">
    <property type="entry name" value="ABHD4"/>
</dbReference>
<dbReference type="PANTHER" id="PTHR10794">
    <property type="entry name" value="ABHYDROLASE DOMAIN-CONTAINING PROTEIN"/>
    <property type="match status" value="1"/>
</dbReference>
<dbReference type="PANTHER" id="PTHR10794:SF44">
    <property type="entry name" value="MEDIUM-CHAIN FATTY ACID ETHYL ESTER SYNTHASE_ESTERASE 1-RELATED"/>
    <property type="match status" value="1"/>
</dbReference>
<dbReference type="Pfam" id="PF00561">
    <property type="entry name" value="Abhydrolase_1"/>
    <property type="match status" value="1"/>
</dbReference>
<dbReference type="PIRSF" id="PIRSF005211">
    <property type="entry name" value="Ab_hydro_YheT"/>
    <property type="match status" value="1"/>
</dbReference>
<dbReference type="SUPFAM" id="SSF53474">
    <property type="entry name" value="alpha/beta-Hydrolases"/>
    <property type="match status" value="1"/>
</dbReference>
<dbReference type="PROSITE" id="PS01133">
    <property type="entry name" value="UPF0017"/>
    <property type="match status" value="1"/>
</dbReference>
<protein>
    <recommendedName>
        <fullName>Medium-chain fatty acid ethyl ester synthase/esterase 2</fullName>
    </recommendedName>
    <alternativeName>
        <fullName>Alcohol O-acetyltransferase</fullName>
        <ecNumber>2.3.1.84</ecNumber>
        <ecNumber>3.1.1.-</ecNumber>
    </alternativeName>
    <alternativeName>
        <fullName>Ethanol hexanoyl transferase 1</fullName>
    </alternativeName>
</protein>
<keyword id="KW-0012">Acyltransferase</keyword>
<keyword id="KW-0378">Hydrolase</keyword>
<keyword id="KW-1017">Isopeptide bond</keyword>
<keyword id="KW-1185">Reference proteome</keyword>
<keyword id="KW-0719">Serine esterase</keyword>
<keyword id="KW-0808">Transferase</keyword>
<keyword id="KW-0832">Ubl conjugation</keyword>
<reference key="1">
    <citation type="journal article" date="1994" name="EMBO J.">
        <title>Complete DNA sequence of yeast chromosome II.</title>
        <authorList>
            <person name="Feldmann H."/>
            <person name="Aigle M."/>
            <person name="Aljinovic G."/>
            <person name="Andre B."/>
            <person name="Baclet M.C."/>
            <person name="Barthe C."/>
            <person name="Baur A."/>
            <person name="Becam A.-M."/>
            <person name="Biteau N."/>
            <person name="Boles E."/>
            <person name="Brandt T."/>
            <person name="Brendel M."/>
            <person name="Brueckner M."/>
            <person name="Bussereau F."/>
            <person name="Christiansen C."/>
            <person name="Contreras R."/>
            <person name="Crouzet M."/>
            <person name="Cziepluch C."/>
            <person name="Demolis N."/>
            <person name="Delaveau T."/>
            <person name="Doignon F."/>
            <person name="Domdey H."/>
            <person name="Duesterhus S."/>
            <person name="Dubois E."/>
            <person name="Dujon B."/>
            <person name="El Bakkoury M."/>
            <person name="Entian K.-D."/>
            <person name="Feuermann M."/>
            <person name="Fiers W."/>
            <person name="Fobo G.M."/>
            <person name="Fritz C."/>
            <person name="Gassenhuber J."/>
            <person name="Glansdorff N."/>
            <person name="Goffeau A."/>
            <person name="Grivell L.A."/>
            <person name="de Haan M."/>
            <person name="Hein C."/>
            <person name="Herbert C.J."/>
            <person name="Hollenberg C.P."/>
            <person name="Holmstroem K."/>
            <person name="Jacq C."/>
            <person name="Jacquet M."/>
            <person name="Jauniaux J.-C."/>
            <person name="Jonniaux J.-L."/>
            <person name="Kallesoee T."/>
            <person name="Kiesau P."/>
            <person name="Kirchrath L."/>
            <person name="Koetter P."/>
            <person name="Korol S."/>
            <person name="Liebl S."/>
            <person name="Logghe M."/>
            <person name="Lohan A.J.E."/>
            <person name="Louis E.J."/>
            <person name="Li Z.Y."/>
            <person name="Maat M.J."/>
            <person name="Mallet L."/>
            <person name="Mannhaupt G."/>
            <person name="Messenguy F."/>
            <person name="Miosga T."/>
            <person name="Molemans F."/>
            <person name="Mueller S."/>
            <person name="Nasr F."/>
            <person name="Obermaier B."/>
            <person name="Perea J."/>
            <person name="Pierard A."/>
            <person name="Piravandi E."/>
            <person name="Pohl F.M."/>
            <person name="Pohl T.M."/>
            <person name="Potier S."/>
            <person name="Proft M."/>
            <person name="Purnelle B."/>
            <person name="Ramezani Rad M."/>
            <person name="Rieger M."/>
            <person name="Rose M."/>
            <person name="Schaaff-Gerstenschlaeger I."/>
            <person name="Scherens B."/>
            <person name="Schwarzlose C."/>
            <person name="Skala J."/>
            <person name="Slonimski P.P."/>
            <person name="Smits P.H.M."/>
            <person name="Souciet J.-L."/>
            <person name="Steensma H.Y."/>
            <person name="Stucka R."/>
            <person name="Urrestarazu L.A."/>
            <person name="van der Aart Q.J.M."/>
            <person name="Van Dyck L."/>
            <person name="Vassarotti A."/>
            <person name="Vetter I."/>
            <person name="Vierendeels F."/>
            <person name="Vissers S."/>
            <person name="Wagner G."/>
            <person name="de Wergifosse P."/>
            <person name="Wolfe K.H."/>
            <person name="Zagulski M."/>
            <person name="Zimmermann F.K."/>
            <person name="Mewes H.-W."/>
            <person name="Kleine K."/>
        </authorList>
    </citation>
    <scope>NUCLEOTIDE SEQUENCE [LARGE SCALE GENOMIC DNA]</scope>
    <source>
        <strain>ATCC 204508 / S288c</strain>
    </source>
</reference>
<reference key="2">
    <citation type="journal article" date="2014" name="G3 (Bethesda)">
        <title>The reference genome sequence of Saccharomyces cerevisiae: Then and now.</title>
        <authorList>
            <person name="Engel S.R."/>
            <person name="Dietrich F.S."/>
            <person name="Fisk D.G."/>
            <person name="Binkley G."/>
            <person name="Balakrishnan R."/>
            <person name="Costanzo M.C."/>
            <person name="Dwight S.S."/>
            <person name="Hitz B.C."/>
            <person name="Karra K."/>
            <person name="Nash R.S."/>
            <person name="Weng S."/>
            <person name="Wong E.D."/>
            <person name="Lloyd P."/>
            <person name="Skrzypek M.S."/>
            <person name="Miyasato S.R."/>
            <person name="Simison M."/>
            <person name="Cherry J.M."/>
        </authorList>
    </citation>
    <scope>GENOME REANNOTATION</scope>
    <source>
        <strain>ATCC 204508 / S288c</strain>
    </source>
</reference>
<reference key="3">
    <citation type="journal article" date="2003" name="Nature">
        <title>Global analysis of protein expression in yeast.</title>
        <authorList>
            <person name="Ghaemmaghami S."/>
            <person name="Huh W.-K."/>
            <person name="Bower K."/>
            <person name="Howson R.W."/>
            <person name="Belle A."/>
            <person name="Dephoure N."/>
            <person name="O'Shea E.K."/>
            <person name="Weissman J.S."/>
        </authorList>
    </citation>
    <scope>LEVEL OF PROTEIN EXPRESSION [LARGE SCALE ANALYSIS]</scope>
</reference>
<reference key="4">
    <citation type="journal article" date="2006" name="J. Biol. Chem.">
        <title>The Saccharomyces cerevisiae EHT1 and EEB1 genes encode novel enzymes with medium-chain fatty acid ethyl ester synthesis and hydrolysis capacity.</title>
        <authorList>
            <person name="Saerens S.M.G."/>
            <person name="Verstrepen K.J."/>
            <person name="Van Laere S.D."/>
            <person name="Voet A.R."/>
            <person name="Van Dijck P."/>
            <person name="Delvaux F.R."/>
            <person name="Thevelein J.M."/>
        </authorList>
    </citation>
    <scope>FUNCTION</scope>
</reference>
<reference key="5">
    <citation type="journal article" date="2012" name="Proteomics">
        <title>Sites of ubiquitin attachment in Saccharomyces cerevisiae.</title>
        <authorList>
            <person name="Starita L.M."/>
            <person name="Lo R.S."/>
            <person name="Eng J.K."/>
            <person name="von Haller P.D."/>
            <person name="Fields S."/>
        </authorList>
    </citation>
    <scope>UBIQUITINATION [LARGE SCALE ANALYSIS] AT LYS-114</scope>
    <scope>IDENTIFICATION BY MASS SPECTROMETRY [LARGE SCALE ANALYSIS]</scope>
</reference>
<accession>P38295</accession>
<accession>D6VQH2</accession>
<name>MCFS2_YEAST</name>